<gene>
    <name evidence="1" type="primary">yjjB</name>
    <name type="ordered locus">STY4898</name>
    <name type="ordered locus">t4588</name>
</gene>
<reference key="1">
    <citation type="journal article" date="2001" name="Nature">
        <title>Complete genome sequence of a multiple drug resistant Salmonella enterica serovar Typhi CT18.</title>
        <authorList>
            <person name="Parkhill J."/>
            <person name="Dougan G."/>
            <person name="James K.D."/>
            <person name="Thomson N.R."/>
            <person name="Pickard D."/>
            <person name="Wain J."/>
            <person name="Churcher C.M."/>
            <person name="Mungall K.L."/>
            <person name="Bentley S.D."/>
            <person name="Holden M.T.G."/>
            <person name="Sebaihia M."/>
            <person name="Baker S."/>
            <person name="Basham D."/>
            <person name="Brooks K."/>
            <person name="Chillingworth T."/>
            <person name="Connerton P."/>
            <person name="Cronin A."/>
            <person name="Davis P."/>
            <person name="Davies R.M."/>
            <person name="Dowd L."/>
            <person name="White N."/>
            <person name="Farrar J."/>
            <person name="Feltwell T."/>
            <person name="Hamlin N."/>
            <person name="Haque A."/>
            <person name="Hien T.T."/>
            <person name="Holroyd S."/>
            <person name="Jagels K."/>
            <person name="Krogh A."/>
            <person name="Larsen T.S."/>
            <person name="Leather S."/>
            <person name="Moule S."/>
            <person name="O'Gaora P."/>
            <person name="Parry C."/>
            <person name="Quail M.A."/>
            <person name="Rutherford K.M."/>
            <person name="Simmonds M."/>
            <person name="Skelton J."/>
            <person name="Stevens K."/>
            <person name="Whitehead S."/>
            <person name="Barrell B.G."/>
        </authorList>
    </citation>
    <scope>NUCLEOTIDE SEQUENCE [LARGE SCALE GENOMIC DNA]</scope>
    <source>
        <strain>CT18</strain>
    </source>
</reference>
<reference key="2">
    <citation type="journal article" date="2003" name="J. Bacteriol.">
        <title>Comparative genomics of Salmonella enterica serovar Typhi strains Ty2 and CT18.</title>
        <authorList>
            <person name="Deng W."/>
            <person name="Liou S.-R."/>
            <person name="Plunkett G. III"/>
            <person name="Mayhew G.F."/>
            <person name="Rose D.J."/>
            <person name="Burland V."/>
            <person name="Kodoyianni V."/>
            <person name="Schwartz D.C."/>
            <person name="Blattner F.R."/>
        </authorList>
    </citation>
    <scope>NUCLEOTIDE SEQUENCE [LARGE SCALE GENOMIC DNA]</scope>
    <source>
        <strain>ATCC 700931 / Ty2</strain>
    </source>
</reference>
<name>YJJB_SALTI</name>
<dbReference type="EMBL" id="AE014613">
    <property type="protein sequence ID" value="AAO72023.1"/>
    <property type="molecule type" value="Genomic_DNA"/>
</dbReference>
<dbReference type="EMBL" id="AL513382">
    <property type="protein sequence ID" value="CAD03383.1"/>
    <property type="molecule type" value="Genomic_DNA"/>
</dbReference>
<dbReference type="RefSeq" id="NP_458960.1">
    <property type="nucleotide sequence ID" value="NC_003198.1"/>
</dbReference>
<dbReference type="RefSeq" id="WP_000511327.1">
    <property type="nucleotide sequence ID" value="NZ_WSUR01000014.1"/>
</dbReference>
<dbReference type="STRING" id="220341.gene:17588714"/>
<dbReference type="KEGG" id="stt:t4588"/>
<dbReference type="KEGG" id="sty:STY4898"/>
<dbReference type="PATRIC" id="fig|220341.7.peg.5019"/>
<dbReference type="eggNOG" id="COG3610">
    <property type="taxonomic scope" value="Bacteria"/>
</dbReference>
<dbReference type="HOGENOM" id="CLU_117642_1_0_6"/>
<dbReference type="OMA" id="AMVEINH"/>
<dbReference type="OrthoDB" id="9810047at2"/>
<dbReference type="Proteomes" id="UP000000541">
    <property type="component" value="Chromosome"/>
</dbReference>
<dbReference type="Proteomes" id="UP000002670">
    <property type="component" value="Chromosome"/>
</dbReference>
<dbReference type="GO" id="GO:0005886">
    <property type="term" value="C:plasma membrane"/>
    <property type="evidence" value="ECO:0007669"/>
    <property type="project" value="UniProtKB-SubCell"/>
</dbReference>
<dbReference type="GO" id="GO:0015744">
    <property type="term" value="P:succinate transport"/>
    <property type="evidence" value="ECO:0007669"/>
    <property type="project" value="UniProtKB-UniRule"/>
</dbReference>
<dbReference type="HAMAP" id="MF_01191">
    <property type="entry name" value="YjjB"/>
    <property type="match status" value="1"/>
</dbReference>
<dbReference type="InterPro" id="IPR024528">
    <property type="entry name" value="ThrE_2"/>
</dbReference>
<dbReference type="InterPro" id="IPR050539">
    <property type="entry name" value="ThrE_Dicarb/AminoAcid_Exp"/>
</dbReference>
<dbReference type="InterPro" id="IPR020914">
    <property type="entry name" value="YjjB"/>
</dbReference>
<dbReference type="NCBIfam" id="NF007391">
    <property type="entry name" value="PRK09917.1"/>
    <property type="match status" value="1"/>
</dbReference>
<dbReference type="PANTHER" id="PTHR34390:SF1">
    <property type="entry name" value="SUCCINATE TRANSPORTER SUBUNIT YJJB-RELATED"/>
    <property type="match status" value="1"/>
</dbReference>
<dbReference type="PANTHER" id="PTHR34390">
    <property type="entry name" value="UPF0442 PROTEIN YJJB-RELATED"/>
    <property type="match status" value="1"/>
</dbReference>
<dbReference type="Pfam" id="PF12821">
    <property type="entry name" value="ThrE_2"/>
    <property type="match status" value="1"/>
</dbReference>
<keyword id="KW-0997">Cell inner membrane</keyword>
<keyword id="KW-1003">Cell membrane</keyword>
<keyword id="KW-0472">Membrane</keyword>
<keyword id="KW-0812">Transmembrane</keyword>
<keyword id="KW-1133">Transmembrane helix</keyword>
<keyword id="KW-0813">Transport</keyword>
<comment type="function">
    <text evidence="1">Involved in succinate export with YjjP. Both proteins are required for export.</text>
</comment>
<comment type="subunit">
    <text evidence="1">The transporter is composed of YjjB and YjjP.</text>
</comment>
<comment type="subcellular location">
    <subcellularLocation>
        <location evidence="1">Cell inner membrane</location>
        <topology evidence="1">Multi-pass membrane protein</topology>
    </subcellularLocation>
</comment>
<comment type="similarity">
    <text evidence="1">Belongs to the ThrE exporter (TC 2.A.79) family.</text>
</comment>
<accession>Q8Z0W0</accession>
<accession>Q7C4V1</accession>
<proteinExistence type="inferred from homology"/>
<organism>
    <name type="scientific">Salmonella typhi</name>
    <dbReference type="NCBI Taxonomy" id="90370"/>
    <lineage>
        <taxon>Bacteria</taxon>
        <taxon>Pseudomonadati</taxon>
        <taxon>Pseudomonadota</taxon>
        <taxon>Gammaproteobacteria</taxon>
        <taxon>Enterobacterales</taxon>
        <taxon>Enterobacteriaceae</taxon>
        <taxon>Salmonella</taxon>
    </lineage>
</organism>
<feature type="chain" id="PRO_0000293674" description="Probable succinate transporter subunit YjjB">
    <location>
        <begin position="1"/>
        <end position="157"/>
    </location>
</feature>
<feature type="transmembrane region" description="Helical" evidence="1">
    <location>
        <begin position="8"/>
        <end position="28"/>
    </location>
</feature>
<feature type="transmembrane region" description="Helical" evidence="1">
    <location>
        <begin position="34"/>
        <end position="54"/>
    </location>
</feature>
<feature type="transmembrane region" description="Helical" evidence="1">
    <location>
        <begin position="55"/>
        <end position="75"/>
    </location>
</feature>
<feature type="transmembrane region" description="Helical" evidence="1">
    <location>
        <begin position="87"/>
        <end position="107"/>
    </location>
</feature>
<feature type="transmembrane region" description="Helical" evidence="1">
    <location>
        <begin position="129"/>
        <end position="149"/>
    </location>
</feature>
<evidence type="ECO:0000255" key="1">
    <source>
        <dbReference type="HAMAP-Rule" id="MF_01191"/>
    </source>
</evidence>
<sequence>MGIIDFLLALMQDMILSAIPAVGFAMVFNVPHRALPWCALLGALGHGLRMLMMSAGFNIEWSTFMASLLVGSIGIQWSRWYLAHPKVFTVAAVIPMFPGISAYTAMISAVKISHLGYSEPMMITLLTNFLKASSIVGALSIGLSVPGLWLYRKRPRV</sequence>
<protein>
    <recommendedName>
        <fullName evidence="1">Probable succinate transporter subunit YjjB</fullName>
    </recommendedName>
</protein>